<reference key="1">
    <citation type="journal article" date="2003" name="Nat. Genet.">
        <title>Comparative analysis of the genome sequences of Bordetella pertussis, Bordetella parapertussis and Bordetella bronchiseptica.</title>
        <authorList>
            <person name="Parkhill J."/>
            <person name="Sebaihia M."/>
            <person name="Preston A."/>
            <person name="Murphy L.D."/>
            <person name="Thomson N.R."/>
            <person name="Harris D.E."/>
            <person name="Holden M.T.G."/>
            <person name="Churcher C.M."/>
            <person name="Bentley S.D."/>
            <person name="Mungall K.L."/>
            <person name="Cerdeno-Tarraga A.-M."/>
            <person name="Temple L."/>
            <person name="James K.D."/>
            <person name="Harris B."/>
            <person name="Quail M.A."/>
            <person name="Achtman M."/>
            <person name="Atkin R."/>
            <person name="Baker S."/>
            <person name="Basham D."/>
            <person name="Bason N."/>
            <person name="Cherevach I."/>
            <person name="Chillingworth T."/>
            <person name="Collins M."/>
            <person name="Cronin A."/>
            <person name="Davis P."/>
            <person name="Doggett J."/>
            <person name="Feltwell T."/>
            <person name="Goble A."/>
            <person name="Hamlin N."/>
            <person name="Hauser H."/>
            <person name="Holroyd S."/>
            <person name="Jagels K."/>
            <person name="Leather S."/>
            <person name="Moule S."/>
            <person name="Norberczak H."/>
            <person name="O'Neil S."/>
            <person name="Ormond D."/>
            <person name="Price C."/>
            <person name="Rabbinowitsch E."/>
            <person name="Rutter S."/>
            <person name="Sanders M."/>
            <person name="Saunders D."/>
            <person name="Seeger K."/>
            <person name="Sharp S."/>
            <person name="Simmonds M."/>
            <person name="Skelton J."/>
            <person name="Squares R."/>
            <person name="Squares S."/>
            <person name="Stevens K."/>
            <person name="Unwin L."/>
            <person name="Whitehead S."/>
            <person name="Barrell B.G."/>
            <person name="Maskell D.J."/>
        </authorList>
    </citation>
    <scope>NUCLEOTIDE SEQUENCE [LARGE SCALE GENOMIC DNA]</scope>
    <source>
        <strain>Tohama I / ATCC BAA-589 / NCTC 13251</strain>
    </source>
</reference>
<sequence length="205" mass="22721">MDLKLLNDQGQAATFSAPDTIFGRDFNEALVHQIVVAFQANARSGNRAQKDRAEVKHSTKKPWRQKGTGRARAGMTSSPLWRGGGRAFPNSPEENFSQKVNKKMYRAGIRSILSQLAREDRVAVVDTFTLESPKTKLAAAKLKSLGLDSVLIITDNVDENVYLATRNLPYVAVVEPRYADPLSLIHYKKVLITKPAIAQLEEMLG</sequence>
<gene>
    <name evidence="1" type="primary">rplD</name>
    <name type="ordered locus">BP3614</name>
</gene>
<comment type="function">
    <text evidence="1">One of the primary rRNA binding proteins, this protein initially binds near the 5'-end of the 23S rRNA. It is important during the early stages of 50S assembly. It makes multiple contacts with different domains of the 23S rRNA in the assembled 50S subunit and ribosome.</text>
</comment>
<comment type="function">
    <text evidence="1">Forms part of the polypeptide exit tunnel.</text>
</comment>
<comment type="subunit">
    <text evidence="1">Part of the 50S ribosomal subunit.</text>
</comment>
<comment type="similarity">
    <text evidence="1">Belongs to the universal ribosomal protein uL4 family.</text>
</comment>
<dbReference type="EMBL" id="BX640422">
    <property type="protein sequence ID" value="CAE43872.1"/>
    <property type="molecule type" value="Genomic_DNA"/>
</dbReference>
<dbReference type="RefSeq" id="NP_882124.1">
    <property type="nucleotide sequence ID" value="NC_002929.2"/>
</dbReference>
<dbReference type="RefSeq" id="WP_010931565.1">
    <property type="nucleotide sequence ID" value="NZ_CP039022.1"/>
</dbReference>
<dbReference type="SMR" id="Q7VTD2"/>
<dbReference type="STRING" id="257313.BP3614"/>
<dbReference type="PaxDb" id="257313-BP3614"/>
<dbReference type="GeneID" id="69600158"/>
<dbReference type="KEGG" id="bpe:BP3614"/>
<dbReference type="PATRIC" id="fig|257313.5.peg.3912"/>
<dbReference type="eggNOG" id="COG0088">
    <property type="taxonomic scope" value="Bacteria"/>
</dbReference>
<dbReference type="HOGENOM" id="CLU_041575_5_2_4"/>
<dbReference type="Proteomes" id="UP000002676">
    <property type="component" value="Chromosome"/>
</dbReference>
<dbReference type="GO" id="GO:1990904">
    <property type="term" value="C:ribonucleoprotein complex"/>
    <property type="evidence" value="ECO:0007669"/>
    <property type="project" value="UniProtKB-KW"/>
</dbReference>
<dbReference type="GO" id="GO:0005840">
    <property type="term" value="C:ribosome"/>
    <property type="evidence" value="ECO:0007669"/>
    <property type="project" value="UniProtKB-KW"/>
</dbReference>
<dbReference type="GO" id="GO:0019843">
    <property type="term" value="F:rRNA binding"/>
    <property type="evidence" value="ECO:0007669"/>
    <property type="project" value="UniProtKB-UniRule"/>
</dbReference>
<dbReference type="GO" id="GO:0003735">
    <property type="term" value="F:structural constituent of ribosome"/>
    <property type="evidence" value="ECO:0007669"/>
    <property type="project" value="InterPro"/>
</dbReference>
<dbReference type="GO" id="GO:0006412">
    <property type="term" value="P:translation"/>
    <property type="evidence" value="ECO:0007669"/>
    <property type="project" value="UniProtKB-UniRule"/>
</dbReference>
<dbReference type="Gene3D" id="3.40.1370.10">
    <property type="match status" value="1"/>
</dbReference>
<dbReference type="HAMAP" id="MF_01328_B">
    <property type="entry name" value="Ribosomal_uL4_B"/>
    <property type="match status" value="1"/>
</dbReference>
<dbReference type="InterPro" id="IPR002136">
    <property type="entry name" value="Ribosomal_uL4"/>
</dbReference>
<dbReference type="InterPro" id="IPR013005">
    <property type="entry name" value="Ribosomal_uL4-like"/>
</dbReference>
<dbReference type="InterPro" id="IPR023574">
    <property type="entry name" value="Ribosomal_uL4_dom_sf"/>
</dbReference>
<dbReference type="NCBIfam" id="TIGR03953">
    <property type="entry name" value="rplD_bact"/>
    <property type="match status" value="1"/>
</dbReference>
<dbReference type="PANTHER" id="PTHR10746">
    <property type="entry name" value="50S RIBOSOMAL PROTEIN L4"/>
    <property type="match status" value="1"/>
</dbReference>
<dbReference type="PANTHER" id="PTHR10746:SF6">
    <property type="entry name" value="LARGE RIBOSOMAL SUBUNIT PROTEIN UL4M"/>
    <property type="match status" value="1"/>
</dbReference>
<dbReference type="Pfam" id="PF00573">
    <property type="entry name" value="Ribosomal_L4"/>
    <property type="match status" value="1"/>
</dbReference>
<dbReference type="SUPFAM" id="SSF52166">
    <property type="entry name" value="Ribosomal protein L4"/>
    <property type="match status" value="1"/>
</dbReference>
<organism>
    <name type="scientific">Bordetella pertussis (strain Tohama I / ATCC BAA-589 / NCTC 13251)</name>
    <dbReference type="NCBI Taxonomy" id="257313"/>
    <lineage>
        <taxon>Bacteria</taxon>
        <taxon>Pseudomonadati</taxon>
        <taxon>Pseudomonadota</taxon>
        <taxon>Betaproteobacteria</taxon>
        <taxon>Burkholderiales</taxon>
        <taxon>Alcaligenaceae</taxon>
        <taxon>Bordetella</taxon>
    </lineage>
</organism>
<accession>Q7VTD2</accession>
<proteinExistence type="inferred from homology"/>
<evidence type="ECO:0000255" key="1">
    <source>
        <dbReference type="HAMAP-Rule" id="MF_01328"/>
    </source>
</evidence>
<evidence type="ECO:0000256" key="2">
    <source>
        <dbReference type="SAM" id="MobiDB-lite"/>
    </source>
</evidence>
<evidence type="ECO:0000305" key="3"/>
<protein>
    <recommendedName>
        <fullName evidence="1">Large ribosomal subunit protein uL4</fullName>
    </recommendedName>
    <alternativeName>
        <fullName evidence="3">50S ribosomal protein L4</fullName>
    </alternativeName>
</protein>
<feature type="chain" id="PRO_0000129190" description="Large ribosomal subunit protein uL4">
    <location>
        <begin position="1"/>
        <end position="205"/>
    </location>
</feature>
<feature type="region of interest" description="Disordered" evidence="2">
    <location>
        <begin position="43"/>
        <end position="95"/>
    </location>
</feature>
<feature type="compositionally biased region" description="Basic and acidic residues" evidence="2">
    <location>
        <begin position="48"/>
        <end position="57"/>
    </location>
</feature>
<feature type="compositionally biased region" description="Basic residues" evidence="2">
    <location>
        <begin position="58"/>
        <end position="69"/>
    </location>
</feature>
<keyword id="KW-1185">Reference proteome</keyword>
<keyword id="KW-0687">Ribonucleoprotein</keyword>
<keyword id="KW-0689">Ribosomal protein</keyword>
<keyword id="KW-0694">RNA-binding</keyword>
<keyword id="KW-0699">rRNA-binding</keyword>
<name>RL4_BORPE</name>